<dbReference type="EMBL" id="CP001068">
    <property type="protein sequence ID" value="ACD25828.1"/>
    <property type="molecule type" value="Genomic_DNA"/>
</dbReference>
<dbReference type="SMR" id="B2U7G6"/>
<dbReference type="STRING" id="402626.Rpic_0677"/>
<dbReference type="KEGG" id="rpi:Rpic_0677"/>
<dbReference type="eggNOG" id="COG1327">
    <property type="taxonomic scope" value="Bacteria"/>
</dbReference>
<dbReference type="HOGENOM" id="CLU_108412_0_1_4"/>
<dbReference type="GO" id="GO:0005524">
    <property type="term" value="F:ATP binding"/>
    <property type="evidence" value="ECO:0007669"/>
    <property type="project" value="UniProtKB-KW"/>
</dbReference>
<dbReference type="GO" id="GO:0003677">
    <property type="term" value="F:DNA binding"/>
    <property type="evidence" value="ECO:0007669"/>
    <property type="project" value="UniProtKB-KW"/>
</dbReference>
<dbReference type="GO" id="GO:0008270">
    <property type="term" value="F:zinc ion binding"/>
    <property type="evidence" value="ECO:0007669"/>
    <property type="project" value="UniProtKB-UniRule"/>
</dbReference>
<dbReference type="GO" id="GO:0045892">
    <property type="term" value="P:negative regulation of DNA-templated transcription"/>
    <property type="evidence" value="ECO:0007669"/>
    <property type="project" value="UniProtKB-UniRule"/>
</dbReference>
<dbReference type="HAMAP" id="MF_00440">
    <property type="entry name" value="NrdR"/>
    <property type="match status" value="1"/>
</dbReference>
<dbReference type="InterPro" id="IPR005144">
    <property type="entry name" value="ATP-cone_dom"/>
</dbReference>
<dbReference type="InterPro" id="IPR055173">
    <property type="entry name" value="NrdR-like_N"/>
</dbReference>
<dbReference type="InterPro" id="IPR003796">
    <property type="entry name" value="RNR_NrdR-like"/>
</dbReference>
<dbReference type="NCBIfam" id="TIGR00244">
    <property type="entry name" value="transcriptional regulator NrdR"/>
    <property type="match status" value="1"/>
</dbReference>
<dbReference type="PANTHER" id="PTHR30455">
    <property type="entry name" value="TRANSCRIPTIONAL REPRESSOR NRDR"/>
    <property type="match status" value="1"/>
</dbReference>
<dbReference type="PANTHER" id="PTHR30455:SF2">
    <property type="entry name" value="TRANSCRIPTIONAL REPRESSOR NRDR"/>
    <property type="match status" value="1"/>
</dbReference>
<dbReference type="Pfam" id="PF03477">
    <property type="entry name" value="ATP-cone"/>
    <property type="match status" value="1"/>
</dbReference>
<dbReference type="Pfam" id="PF22811">
    <property type="entry name" value="Zn_ribbon_NrdR"/>
    <property type="match status" value="1"/>
</dbReference>
<dbReference type="PROSITE" id="PS51161">
    <property type="entry name" value="ATP_CONE"/>
    <property type="match status" value="1"/>
</dbReference>
<protein>
    <recommendedName>
        <fullName evidence="1">Transcriptional repressor NrdR</fullName>
    </recommendedName>
</protein>
<organism>
    <name type="scientific">Ralstonia pickettii (strain 12J)</name>
    <dbReference type="NCBI Taxonomy" id="402626"/>
    <lineage>
        <taxon>Bacteria</taxon>
        <taxon>Pseudomonadati</taxon>
        <taxon>Pseudomonadota</taxon>
        <taxon>Betaproteobacteria</taxon>
        <taxon>Burkholderiales</taxon>
        <taxon>Burkholderiaceae</taxon>
        <taxon>Ralstonia</taxon>
    </lineage>
</organism>
<name>NRDR_RALPJ</name>
<proteinExistence type="inferred from homology"/>
<comment type="function">
    <text evidence="1">Negatively regulates transcription of bacterial ribonucleotide reductase nrd genes and operons by binding to NrdR-boxes.</text>
</comment>
<comment type="cofactor">
    <cofactor evidence="1">
        <name>Zn(2+)</name>
        <dbReference type="ChEBI" id="CHEBI:29105"/>
    </cofactor>
    <text evidence="1">Binds 1 zinc ion.</text>
</comment>
<comment type="similarity">
    <text evidence="1">Belongs to the NrdR family.</text>
</comment>
<evidence type="ECO:0000255" key="1">
    <source>
        <dbReference type="HAMAP-Rule" id="MF_00440"/>
    </source>
</evidence>
<reference key="1">
    <citation type="submission" date="2008-05" db="EMBL/GenBank/DDBJ databases">
        <title>Complete sequence of chromosome 1 of Ralstonia pickettii 12J.</title>
        <authorList>
            <person name="Lucas S."/>
            <person name="Copeland A."/>
            <person name="Lapidus A."/>
            <person name="Glavina del Rio T."/>
            <person name="Dalin E."/>
            <person name="Tice H."/>
            <person name="Bruce D."/>
            <person name="Goodwin L."/>
            <person name="Pitluck S."/>
            <person name="Meincke L."/>
            <person name="Brettin T."/>
            <person name="Detter J.C."/>
            <person name="Han C."/>
            <person name="Kuske C.R."/>
            <person name="Schmutz J."/>
            <person name="Larimer F."/>
            <person name="Land M."/>
            <person name="Hauser L."/>
            <person name="Kyrpides N."/>
            <person name="Mikhailova N."/>
            <person name="Marsh T."/>
            <person name="Richardson P."/>
        </authorList>
    </citation>
    <scope>NUCLEOTIDE SEQUENCE [LARGE SCALE GENOMIC DNA]</scope>
    <source>
        <strain>12J</strain>
    </source>
</reference>
<keyword id="KW-0067">ATP-binding</keyword>
<keyword id="KW-0238">DNA-binding</keyword>
<keyword id="KW-0479">Metal-binding</keyword>
<keyword id="KW-0547">Nucleotide-binding</keyword>
<keyword id="KW-0678">Repressor</keyword>
<keyword id="KW-0804">Transcription</keyword>
<keyword id="KW-0805">Transcription regulation</keyword>
<keyword id="KW-0862">Zinc</keyword>
<keyword id="KW-0863">Zinc-finger</keyword>
<sequence>MKCPFCGHAATQVIDTRMSEEGDTVRRRRRCESCDRRFTTYERIELFFPAVVKKNGSRVDYDRNKVKDSMRLALRKRPVSAEAIDEAIARIEEKLLSHGEKEIGSDRVGELVMRELKRLDKIGYIRFASVYRSFEDLAEFRDVLDEVAATNVRK</sequence>
<gene>
    <name evidence="1" type="primary">nrdR</name>
    <name type="ordered locus">Rpic_0677</name>
</gene>
<accession>B2U7G6</accession>
<feature type="chain" id="PRO_1000124535" description="Transcriptional repressor NrdR">
    <location>
        <begin position="1"/>
        <end position="154"/>
    </location>
</feature>
<feature type="domain" description="ATP-cone" evidence="1">
    <location>
        <begin position="49"/>
        <end position="139"/>
    </location>
</feature>
<feature type="zinc finger region" evidence="1">
    <location>
        <begin position="3"/>
        <end position="34"/>
    </location>
</feature>